<gene>
    <name type="primary">Perm1</name>
</gene>
<comment type="function">
    <text evidence="2">Regulates the expression of selective PPARGC1A/B and ESRRA/B/G target genes with roles in glucose and lipid metabolism, energy transfer, contractile function, muscle mitochondrial biogenesis and oxidative capacity. Required for the efficient induction of MT-CO2, MT-CO3, COX4I1, TFB1M, TFB2M, POLRMT and SIRT3 by PPARGC1A. Positively regulates the PPARGC1A/ESRRG-induced expression of CKMT2, TNNI3 and SLC2A4 and negatively regulates the PPARGC1A/ESRRG-induced expression of PDK4.</text>
</comment>
<comment type="subcellular location">
    <subcellularLocation>
        <location evidence="2">Cytoplasm</location>
    </subcellularLocation>
    <subcellularLocation>
        <location evidence="2">Nucleus</location>
    </subcellularLocation>
    <text>Shows a nuclear localization in the presence of PPARGC1A.</text>
</comment>
<comment type="tissue specificity">
    <text evidence="2">Highly expressed in skeletal muscles and heart with lower levels in brown adipose tissue (at protein level). Muscle-specific expression is increased by endurance exercise.</text>
</comment>
<comment type="induction">
    <text evidence="2">By PPARGC1A, PPARGC1B, ESRRA, ESRRB and ESRRG.</text>
</comment>
<comment type="sequence caution" evidence="3">
    <conflict type="erroneous termination">
        <sequence resource="EMBL-CDS" id="BAC29522"/>
    </conflict>
    <text>Truncated C-terminus.</text>
</comment>
<comment type="sequence caution" evidence="3">
    <conflict type="frameshift">
        <sequence resource="EMBL-CDS" id="BAC30714"/>
    </conflict>
</comment>
<proteinExistence type="evidence at protein level"/>
<feature type="chain" id="PRO_0000299541" description="PGC-1 and ERR-induced regulator in muscle protein 1">
    <location>
        <begin position="1"/>
        <end position="807"/>
    </location>
</feature>
<feature type="region of interest" description="Disordered" evidence="1">
    <location>
        <begin position="29"/>
        <end position="80"/>
    </location>
</feature>
<feature type="region of interest" description="Disordered" evidence="1">
    <location>
        <begin position="121"/>
        <end position="391"/>
    </location>
</feature>
<feature type="region of interest" description="Disordered" evidence="1">
    <location>
        <begin position="517"/>
        <end position="548"/>
    </location>
</feature>
<feature type="compositionally biased region" description="Low complexity" evidence="1">
    <location>
        <begin position="40"/>
        <end position="52"/>
    </location>
</feature>
<feature type="compositionally biased region" description="Low complexity" evidence="1">
    <location>
        <begin position="145"/>
        <end position="160"/>
    </location>
</feature>
<feature type="compositionally biased region" description="Polar residues" evidence="1">
    <location>
        <begin position="162"/>
        <end position="171"/>
    </location>
</feature>
<feature type="compositionally biased region" description="Basic residues" evidence="1">
    <location>
        <begin position="180"/>
        <end position="194"/>
    </location>
</feature>
<feature type="compositionally biased region" description="Polar residues" evidence="1">
    <location>
        <begin position="195"/>
        <end position="211"/>
    </location>
</feature>
<feature type="compositionally biased region" description="Polar residues" evidence="1">
    <location>
        <begin position="311"/>
        <end position="346"/>
    </location>
</feature>
<feature type="compositionally biased region" description="Polar residues" evidence="1">
    <location>
        <begin position="363"/>
        <end position="391"/>
    </location>
</feature>
<feature type="modified residue" description="Phosphoserine" evidence="4">
    <location>
        <position position="198"/>
    </location>
</feature>
<feature type="modified residue" description="Phosphothreonine" evidence="4">
    <location>
        <position position="534"/>
    </location>
</feature>
<feature type="modified residue" description="Omega-N-methylarginine" evidence="5">
    <location>
        <position position="548"/>
    </location>
</feature>
<feature type="sequence conflict" description="In Ref. 4; AAI17872/AAI17873." evidence="3" ref="4">
    <original>A</original>
    <variation>V</variation>
    <location>
        <position position="270"/>
    </location>
</feature>
<feature type="sequence conflict" description="In Ref. 4; AAI17872/AAI17873." evidence="3" ref="4">
    <original>Q</original>
    <variation>QSTPASEPDTALSTPASEPDTALSTPASEPDTAL</variation>
    <location>
        <position position="342"/>
    </location>
</feature>
<feature type="sequence conflict" description="In Ref. 4; AAI17872/AAI17873." evidence="3" ref="4">
    <original>M</original>
    <variation>T</variation>
    <location>
        <position position="351"/>
    </location>
</feature>
<feature type="sequence conflict" description="In Ref. 4; AAI17872/AAI17873." evidence="3" ref="4">
    <original>T</original>
    <variation>M</variation>
    <location>
        <position position="362"/>
    </location>
</feature>
<feature type="sequence conflict" description="In Ref. 4; AAI17872/AAI17873." evidence="3" ref="4">
    <original>T</original>
    <variation>M</variation>
    <location>
        <position position="373"/>
    </location>
</feature>
<feature type="sequence conflict" description="In Ref. 4; AAI17872/AAI17873." evidence="3" ref="4">
    <original>T</original>
    <variation>P</variation>
    <location>
        <position position="445"/>
    </location>
</feature>
<protein>
    <recommendedName>
        <fullName>PGC-1 and ERR-induced regulator in muscle protein 1</fullName>
    </recommendedName>
    <alternativeName>
        <fullName>PPARGC1 and ESRR-induced regulator in muscle 1</fullName>
    </alternativeName>
    <alternativeName>
        <fullName>Peroxisome proliferator-activated receptor gamma coactivator 1 and estrogen-related receptor-induced regulator in muscle 1</fullName>
    </alternativeName>
</protein>
<keyword id="KW-0963">Cytoplasm</keyword>
<keyword id="KW-0488">Methylation</keyword>
<keyword id="KW-0539">Nucleus</keyword>
<keyword id="KW-0597">Phosphoprotein</keyword>
<keyword id="KW-1185">Reference proteome</keyword>
<keyword id="KW-0804">Transcription</keyword>
<keyword id="KW-0805">Transcription regulation</keyword>
<organism>
    <name type="scientific">Mus musculus</name>
    <name type="common">Mouse</name>
    <dbReference type="NCBI Taxonomy" id="10090"/>
    <lineage>
        <taxon>Eukaryota</taxon>
        <taxon>Metazoa</taxon>
        <taxon>Chordata</taxon>
        <taxon>Craniata</taxon>
        <taxon>Vertebrata</taxon>
        <taxon>Euteleostomi</taxon>
        <taxon>Mammalia</taxon>
        <taxon>Eutheria</taxon>
        <taxon>Euarchontoglires</taxon>
        <taxon>Glires</taxon>
        <taxon>Rodentia</taxon>
        <taxon>Myomorpha</taxon>
        <taxon>Muroidea</taxon>
        <taxon>Muridae</taxon>
        <taxon>Murinae</taxon>
        <taxon>Mus</taxon>
        <taxon>Mus</taxon>
    </lineage>
</organism>
<name>PERM1_MOUSE</name>
<dbReference type="EMBL" id="KF150176">
    <property type="protein sequence ID" value="AGQ48859.1"/>
    <property type="molecule type" value="mRNA"/>
</dbReference>
<dbReference type="EMBL" id="AK036660">
    <property type="protein sequence ID" value="BAC29522.1"/>
    <property type="status" value="ALT_SEQ"/>
    <property type="molecule type" value="mRNA"/>
</dbReference>
<dbReference type="EMBL" id="AK040833">
    <property type="protein sequence ID" value="BAC30714.1"/>
    <property type="status" value="ALT_FRAME"/>
    <property type="molecule type" value="mRNA"/>
</dbReference>
<dbReference type="EMBL" id="CAAA01066807">
    <property type="status" value="NOT_ANNOTATED_CDS"/>
    <property type="molecule type" value="Genomic_DNA"/>
</dbReference>
<dbReference type="EMBL" id="CT998563">
    <property type="status" value="NOT_ANNOTATED_CDS"/>
    <property type="molecule type" value="Genomic_DNA"/>
</dbReference>
<dbReference type="EMBL" id="BC117871">
    <property type="protein sequence ID" value="AAI17872.1"/>
    <property type="molecule type" value="mRNA"/>
</dbReference>
<dbReference type="EMBL" id="BC117872">
    <property type="protein sequence ID" value="AAI17873.1"/>
    <property type="molecule type" value="mRNA"/>
</dbReference>
<dbReference type="CCDS" id="CCDS51406.1"/>
<dbReference type="RefSeq" id="NP_766005.2">
    <property type="nucleotide sequence ID" value="NM_172417.3"/>
</dbReference>
<dbReference type="RefSeq" id="XP_006539275.1">
    <property type="nucleotide sequence ID" value="XM_006539212.5"/>
</dbReference>
<dbReference type="FunCoup" id="Q149B8">
    <property type="interactions" value="844"/>
</dbReference>
<dbReference type="STRING" id="10090.ENSMUSP00000101197"/>
<dbReference type="GlyGen" id="Q149B8">
    <property type="glycosylation" value="2 sites, 1 O-linked glycan (1 site)"/>
</dbReference>
<dbReference type="iPTMnet" id="Q149B8"/>
<dbReference type="PhosphoSitePlus" id="Q149B8"/>
<dbReference type="jPOST" id="Q149B8"/>
<dbReference type="PaxDb" id="10090-ENSMUSP00000101197"/>
<dbReference type="PeptideAtlas" id="Q149B8"/>
<dbReference type="ProteomicsDB" id="288033"/>
<dbReference type="Antibodypedia" id="51128">
    <property type="antibodies" value="25 antibodies from 7 providers"/>
</dbReference>
<dbReference type="DNASU" id="74183"/>
<dbReference type="Ensembl" id="ENSMUST00000105572.3">
    <property type="protein sequence ID" value="ENSMUSP00000101197.2"/>
    <property type="gene ID" value="ENSMUSG00000078486.4"/>
</dbReference>
<dbReference type="GeneID" id="74183"/>
<dbReference type="KEGG" id="mmu:74183"/>
<dbReference type="UCSC" id="uc008wgm.1">
    <property type="organism name" value="mouse"/>
</dbReference>
<dbReference type="AGR" id="MGI:1921433"/>
<dbReference type="CTD" id="84808"/>
<dbReference type="MGI" id="MGI:1921433">
    <property type="gene designation" value="Perm1"/>
</dbReference>
<dbReference type="VEuPathDB" id="HostDB:ENSMUSG00000078486"/>
<dbReference type="eggNOG" id="ENOG502RYI7">
    <property type="taxonomic scope" value="Eukaryota"/>
</dbReference>
<dbReference type="GeneTree" id="ENSGT00390000017652"/>
<dbReference type="HOGENOM" id="CLU_015049_1_0_1"/>
<dbReference type="InParanoid" id="Q149B8"/>
<dbReference type="OMA" id="EVQWPDT"/>
<dbReference type="OrthoDB" id="8943218at2759"/>
<dbReference type="PhylomeDB" id="Q149B8"/>
<dbReference type="TreeFam" id="TF338365"/>
<dbReference type="BioGRID-ORCS" id="74183">
    <property type="hits" value="3 hits in 78 CRISPR screens"/>
</dbReference>
<dbReference type="ChiTaRS" id="Perm1">
    <property type="organism name" value="mouse"/>
</dbReference>
<dbReference type="PRO" id="PR:Q149B8"/>
<dbReference type="Proteomes" id="UP000000589">
    <property type="component" value="Chromosome 4"/>
</dbReference>
<dbReference type="RNAct" id="Q149B8">
    <property type="molecule type" value="protein"/>
</dbReference>
<dbReference type="Bgee" id="ENSMUSG00000078486">
    <property type="expression patterns" value="Expressed in interventricular septum and 81 other cell types or tissues"/>
</dbReference>
<dbReference type="GO" id="GO:0005737">
    <property type="term" value="C:cytoplasm"/>
    <property type="evidence" value="ECO:0000314"/>
    <property type="project" value="UniProtKB"/>
</dbReference>
<dbReference type="GO" id="GO:0005654">
    <property type="term" value="C:nucleoplasm"/>
    <property type="evidence" value="ECO:0000304"/>
    <property type="project" value="Reactome"/>
</dbReference>
<dbReference type="GO" id="GO:0005634">
    <property type="term" value="C:nucleus"/>
    <property type="evidence" value="ECO:0000314"/>
    <property type="project" value="UniProtKB"/>
</dbReference>
<dbReference type="GO" id="GO:0006355">
    <property type="term" value="P:regulation of DNA-templated transcription"/>
    <property type="evidence" value="ECO:0000314"/>
    <property type="project" value="UniProtKB"/>
</dbReference>
<dbReference type="GO" id="GO:0014850">
    <property type="term" value="P:response to muscle activity"/>
    <property type="evidence" value="ECO:0000314"/>
    <property type="project" value="UniProtKB"/>
</dbReference>
<dbReference type="InterPro" id="IPR043442">
    <property type="entry name" value="Perm1"/>
</dbReference>
<dbReference type="PANTHER" id="PTHR47282">
    <property type="entry name" value="PGC-1 AND ERR-INDUCED REGULATOR IN MUSCLE PROTEIN 1"/>
    <property type="match status" value="1"/>
</dbReference>
<dbReference type="PANTHER" id="PTHR47282:SF1">
    <property type="entry name" value="PGC-1 AND ERR-INDUCED REGULATOR IN MUSCLE PROTEIN 1"/>
    <property type="match status" value="1"/>
</dbReference>
<sequence length="807" mass="85157">MDNFQYSVQLSDREWAEFSATADECGLLQADLASGDEPLSSDIDQGDSSGSSPPGPPPLFTGQLVSQGRGQQSRELEDVAAQQLVSRSQCEPVLALEASHQVAGTSTQSEAPLFPSLDSVCPGQALSFPGPATCRDKMQRLLQGPAPSSPSKAPHSPESPGHSDNPQSSPDSLEASPRNPGRKKRRAVGAKGTKHSGSLDSAATQMSSPQLTRPKEALMSGTLMAKAQQDKPQPDSTSPEQMAREESGLDLSTPILITEQDQIRKTSRAALHVVSKPVQEVHPDVPMASPNVSTRASKPQPDVALPKPASKPQSDIASSTHPFTPDVSLSTLAFKCQPNTNQSTPASEPDMALSTPASEPDTALSTPASEPDTALSTPASEPDTALSTPASRSQLVKAEFASACTPGLHVDLSAAGSEIKPEVSSSMPAAVDVLRTDLPRSVSKTESKESVSIPVKPSLSPISQAEAAMVDTGVSVPPGGSIEKPAGQFSAGSSGESCLGPVQAPKKKKVRFSMAIPSHEDSGSGEPTGSPFLTPEQPPVPRTAAGSRGGSAAWDAVAVAPRLPQPRILKHLPPPVSSVSAEAESGNCFAVTLPEAYEFFFCDTIEEEDEDVEDEEAASQALDEVQWPDTCEFFFRDSRAQRSRCQRGHSPVSPPRADTVAPVPPEGLVPISIPEVYEHFFTEEGFGHRQPAATPMQTSELSREGGLEASTKPVSPTAEHLSLTVRKAGELRSPLTSFTFSQNDMCLVFVAFATWAVRTSDLQAPDAWKTVLLANIGTISAIRYFRRQVGRGHSGRPRSSSSSNPSC</sequence>
<evidence type="ECO:0000256" key="1">
    <source>
        <dbReference type="SAM" id="MobiDB-lite"/>
    </source>
</evidence>
<evidence type="ECO:0000269" key="2">
    <source>
    </source>
</evidence>
<evidence type="ECO:0000305" key="3"/>
<evidence type="ECO:0007744" key="4">
    <source>
    </source>
</evidence>
<evidence type="ECO:0007744" key="5">
    <source>
    </source>
</evidence>
<reference key="1">
    <citation type="journal article" date="2013" name="J. Biol. Chem.">
        <title>Peroxisome proliferator-activated receptor gamma coactivator 1 (PGC-1)- and estrogen-related receptor (ERR)-induced regulator in muscle 1 (Perm1) is a tissue-specific regulator of oxidative capacity in skeletal muscle cells.</title>
        <authorList>
            <person name="Cho Y."/>
            <person name="Hazen B.C."/>
            <person name="Russell A.P."/>
            <person name="Kralli A."/>
        </authorList>
    </citation>
    <scope>NUCLEOTIDE SEQUENCE [MRNA]</scope>
    <scope>FUNCTION</scope>
    <scope>SUBCELLULAR LOCATION</scope>
    <scope>INDUCTION</scope>
    <scope>TISSUE SPECIFICITY</scope>
</reference>
<reference key="2">
    <citation type="journal article" date="2005" name="Science">
        <title>The transcriptional landscape of the mammalian genome.</title>
        <authorList>
            <person name="Carninci P."/>
            <person name="Kasukawa T."/>
            <person name="Katayama S."/>
            <person name="Gough J."/>
            <person name="Frith M.C."/>
            <person name="Maeda N."/>
            <person name="Oyama R."/>
            <person name="Ravasi T."/>
            <person name="Lenhard B."/>
            <person name="Wells C."/>
            <person name="Kodzius R."/>
            <person name="Shimokawa K."/>
            <person name="Bajic V.B."/>
            <person name="Brenner S.E."/>
            <person name="Batalov S."/>
            <person name="Forrest A.R."/>
            <person name="Zavolan M."/>
            <person name="Davis M.J."/>
            <person name="Wilming L.G."/>
            <person name="Aidinis V."/>
            <person name="Allen J.E."/>
            <person name="Ambesi-Impiombato A."/>
            <person name="Apweiler R."/>
            <person name="Aturaliya R.N."/>
            <person name="Bailey T.L."/>
            <person name="Bansal M."/>
            <person name="Baxter L."/>
            <person name="Beisel K.W."/>
            <person name="Bersano T."/>
            <person name="Bono H."/>
            <person name="Chalk A.M."/>
            <person name="Chiu K.P."/>
            <person name="Choudhary V."/>
            <person name="Christoffels A."/>
            <person name="Clutterbuck D.R."/>
            <person name="Crowe M.L."/>
            <person name="Dalla E."/>
            <person name="Dalrymple B.P."/>
            <person name="de Bono B."/>
            <person name="Della Gatta G."/>
            <person name="di Bernardo D."/>
            <person name="Down T."/>
            <person name="Engstrom P."/>
            <person name="Fagiolini M."/>
            <person name="Faulkner G."/>
            <person name="Fletcher C.F."/>
            <person name="Fukushima T."/>
            <person name="Furuno M."/>
            <person name="Futaki S."/>
            <person name="Gariboldi M."/>
            <person name="Georgii-Hemming P."/>
            <person name="Gingeras T.R."/>
            <person name="Gojobori T."/>
            <person name="Green R.E."/>
            <person name="Gustincich S."/>
            <person name="Harbers M."/>
            <person name="Hayashi Y."/>
            <person name="Hensch T.K."/>
            <person name="Hirokawa N."/>
            <person name="Hill D."/>
            <person name="Huminiecki L."/>
            <person name="Iacono M."/>
            <person name="Ikeo K."/>
            <person name="Iwama A."/>
            <person name="Ishikawa T."/>
            <person name="Jakt M."/>
            <person name="Kanapin A."/>
            <person name="Katoh M."/>
            <person name="Kawasawa Y."/>
            <person name="Kelso J."/>
            <person name="Kitamura H."/>
            <person name="Kitano H."/>
            <person name="Kollias G."/>
            <person name="Krishnan S.P."/>
            <person name="Kruger A."/>
            <person name="Kummerfeld S.K."/>
            <person name="Kurochkin I.V."/>
            <person name="Lareau L.F."/>
            <person name="Lazarevic D."/>
            <person name="Lipovich L."/>
            <person name="Liu J."/>
            <person name="Liuni S."/>
            <person name="McWilliam S."/>
            <person name="Madan Babu M."/>
            <person name="Madera M."/>
            <person name="Marchionni L."/>
            <person name="Matsuda H."/>
            <person name="Matsuzawa S."/>
            <person name="Miki H."/>
            <person name="Mignone F."/>
            <person name="Miyake S."/>
            <person name="Morris K."/>
            <person name="Mottagui-Tabar S."/>
            <person name="Mulder N."/>
            <person name="Nakano N."/>
            <person name="Nakauchi H."/>
            <person name="Ng P."/>
            <person name="Nilsson R."/>
            <person name="Nishiguchi S."/>
            <person name="Nishikawa S."/>
            <person name="Nori F."/>
            <person name="Ohara O."/>
            <person name="Okazaki Y."/>
            <person name="Orlando V."/>
            <person name="Pang K.C."/>
            <person name="Pavan W.J."/>
            <person name="Pavesi G."/>
            <person name="Pesole G."/>
            <person name="Petrovsky N."/>
            <person name="Piazza S."/>
            <person name="Reed J."/>
            <person name="Reid J.F."/>
            <person name="Ring B.Z."/>
            <person name="Ringwald M."/>
            <person name="Rost B."/>
            <person name="Ruan Y."/>
            <person name="Salzberg S.L."/>
            <person name="Sandelin A."/>
            <person name="Schneider C."/>
            <person name="Schoenbach C."/>
            <person name="Sekiguchi K."/>
            <person name="Semple C.A."/>
            <person name="Seno S."/>
            <person name="Sessa L."/>
            <person name="Sheng Y."/>
            <person name="Shibata Y."/>
            <person name="Shimada H."/>
            <person name="Shimada K."/>
            <person name="Silva D."/>
            <person name="Sinclair B."/>
            <person name="Sperling S."/>
            <person name="Stupka E."/>
            <person name="Sugiura K."/>
            <person name="Sultana R."/>
            <person name="Takenaka Y."/>
            <person name="Taki K."/>
            <person name="Tammoja K."/>
            <person name="Tan S.L."/>
            <person name="Tang S."/>
            <person name="Taylor M.S."/>
            <person name="Tegner J."/>
            <person name="Teichmann S.A."/>
            <person name="Ueda H.R."/>
            <person name="van Nimwegen E."/>
            <person name="Verardo R."/>
            <person name="Wei C.L."/>
            <person name="Yagi K."/>
            <person name="Yamanishi H."/>
            <person name="Zabarovsky E."/>
            <person name="Zhu S."/>
            <person name="Zimmer A."/>
            <person name="Hide W."/>
            <person name="Bult C."/>
            <person name="Grimmond S.M."/>
            <person name="Teasdale R.D."/>
            <person name="Liu E.T."/>
            <person name="Brusic V."/>
            <person name="Quackenbush J."/>
            <person name="Wahlestedt C."/>
            <person name="Mattick J.S."/>
            <person name="Hume D.A."/>
            <person name="Kai C."/>
            <person name="Sasaki D."/>
            <person name="Tomaru Y."/>
            <person name="Fukuda S."/>
            <person name="Kanamori-Katayama M."/>
            <person name="Suzuki M."/>
            <person name="Aoki J."/>
            <person name="Arakawa T."/>
            <person name="Iida J."/>
            <person name="Imamura K."/>
            <person name="Itoh M."/>
            <person name="Kato T."/>
            <person name="Kawaji H."/>
            <person name="Kawagashira N."/>
            <person name="Kawashima T."/>
            <person name="Kojima M."/>
            <person name="Kondo S."/>
            <person name="Konno H."/>
            <person name="Nakano K."/>
            <person name="Ninomiya N."/>
            <person name="Nishio T."/>
            <person name="Okada M."/>
            <person name="Plessy C."/>
            <person name="Shibata K."/>
            <person name="Shiraki T."/>
            <person name="Suzuki S."/>
            <person name="Tagami M."/>
            <person name="Waki K."/>
            <person name="Watahiki A."/>
            <person name="Okamura-Oho Y."/>
            <person name="Suzuki H."/>
            <person name="Kawai J."/>
            <person name="Hayashizaki Y."/>
        </authorList>
    </citation>
    <scope>NUCLEOTIDE SEQUENCE [LARGE SCALE MRNA]</scope>
    <source>
        <strain>C57BL/6J</strain>
        <tissue>Aorta</tissue>
        <tissue>Bone</tissue>
    </source>
</reference>
<reference key="3">
    <citation type="journal article" date="2009" name="PLoS Biol.">
        <title>Lineage-specific biology revealed by a finished genome assembly of the mouse.</title>
        <authorList>
            <person name="Church D.M."/>
            <person name="Goodstadt L."/>
            <person name="Hillier L.W."/>
            <person name="Zody M.C."/>
            <person name="Goldstein S."/>
            <person name="She X."/>
            <person name="Bult C.J."/>
            <person name="Agarwala R."/>
            <person name="Cherry J.L."/>
            <person name="DiCuccio M."/>
            <person name="Hlavina W."/>
            <person name="Kapustin Y."/>
            <person name="Meric P."/>
            <person name="Maglott D."/>
            <person name="Birtle Z."/>
            <person name="Marques A.C."/>
            <person name="Graves T."/>
            <person name="Zhou S."/>
            <person name="Teague B."/>
            <person name="Potamousis K."/>
            <person name="Churas C."/>
            <person name="Place M."/>
            <person name="Herschleb J."/>
            <person name="Runnheim R."/>
            <person name="Forrest D."/>
            <person name="Amos-Landgraf J."/>
            <person name="Schwartz D.C."/>
            <person name="Cheng Z."/>
            <person name="Lindblad-Toh K."/>
            <person name="Eichler E.E."/>
            <person name="Ponting C.P."/>
        </authorList>
    </citation>
    <scope>NUCLEOTIDE SEQUENCE [LARGE SCALE GENOMIC DNA]</scope>
    <source>
        <strain>C57BL/6J</strain>
    </source>
</reference>
<reference key="4">
    <citation type="journal article" date="2004" name="Genome Res.">
        <title>The status, quality, and expansion of the NIH full-length cDNA project: the Mammalian Gene Collection (MGC).</title>
        <authorList>
            <consortium name="The MGC Project Team"/>
        </authorList>
    </citation>
    <scope>NUCLEOTIDE SEQUENCE [LARGE SCALE MRNA]</scope>
</reference>
<reference key="5">
    <citation type="journal article" date="2010" name="Cell">
        <title>A tissue-specific atlas of mouse protein phosphorylation and expression.</title>
        <authorList>
            <person name="Huttlin E.L."/>
            <person name="Jedrychowski M.P."/>
            <person name="Elias J.E."/>
            <person name="Goswami T."/>
            <person name="Rad R."/>
            <person name="Beausoleil S.A."/>
            <person name="Villen J."/>
            <person name="Haas W."/>
            <person name="Sowa M.E."/>
            <person name="Gygi S.P."/>
        </authorList>
    </citation>
    <scope>PHOSPHORYLATION [LARGE SCALE ANALYSIS] AT SER-198 AND THR-534</scope>
    <scope>IDENTIFICATION BY MASS SPECTROMETRY [LARGE SCALE ANALYSIS]</scope>
    <source>
        <tissue>Brown adipose tissue</tissue>
        <tissue>Heart</tissue>
    </source>
</reference>
<reference key="6">
    <citation type="journal article" date="2014" name="Mol. Cell. Proteomics">
        <title>Immunoaffinity enrichment and mass spectrometry analysis of protein methylation.</title>
        <authorList>
            <person name="Guo A."/>
            <person name="Gu H."/>
            <person name="Zhou J."/>
            <person name="Mulhern D."/>
            <person name="Wang Y."/>
            <person name="Lee K.A."/>
            <person name="Yang V."/>
            <person name="Aguiar M."/>
            <person name="Kornhauser J."/>
            <person name="Jia X."/>
            <person name="Ren J."/>
            <person name="Beausoleil S.A."/>
            <person name="Silva J.C."/>
            <person name="Vemulapalli V."/>
            <person name="Bedford M.T."/>
            <person name="Comb M.J."/>
        </authorList>
    </citation>
    <scope>METHYLATION [LARGE SCALE ANALYSIS] AT ARG-548</scope>
    <scope>IDENTIFICATION BY MASS SPECTROMETRY [LARGE SCALE ANALYSIS]</scope>
    <source>
        <tissue>Brain</tissue>
    </source>
</reference>
<accession>Q149B8</accession>
<accession>E9QP35</accession>
<accession>Q8BS19</accession>
<accession>Q8CB71</accession>